<dbReference type="EMBL" id="CP000849">
    <property type="protein sequence ID" value="ABV78809.1"/>
    <property type="molecule type" value="Genomic_DNA"/>
</dbReference>
<dbReference type="RefSeq" id="WP_011477703.1">
    <property type="nucleotide sequence ID" value="NC_009883.1"/>
</dbReference>
<dbReference type="SMR" id="A8GVD2"/>
<dbReference type="KEGG" id="rbo:A1I_02125"/>
<dbReference type="HOGENOM" id="CLU_131047_1_5_5"/>
<dbReference type="GO" id="GO:0022625">
    <property type="term" value="C:cytosolic large ribosomal subunit"/>
    <property type="evidence" value="ECO:0007669"/>
    <property type="project" value="TreeGrafter"/>
</dbReference>
<dbReference type="GO" id="GO:0003735">
    <property type="term" value="F:structural constituent of ribosome"/>
    <property type="evidence" value="ECO:0007669"/>
    <property type="project" value="InterPro"/>
</dbReference>
<dbReference type="GO" id="GO:0006412">
    <property type="term" value="P:translation"/>
    <property type="evidence" value="ECO:0007669"/>
    <property type="project" value="UniProtKB-UniRule"/>
</dbReference>
<dbReference type="CDD" id="cd01658">
    <property type="entry name" value="Ribosomal_L30"/>
    <property type="match status" value="1"/>
</dbReference>
<dbReference type="Gene3D" id="3.30.1390.20">
    <property type="entry name" value="Ribosomal protein L30, ferredoxin-like fold domain"/>
    <property type="match status" value="1"/>
</dbReference>
<dbReference type="HAMAP" id="MF_01371_B">
    <property type="entry name" value="Ribosomal_uL30_B"/>
    <property type="match status" value="1"/>
</dbReference>
<dbReference type="InterPro" id="IPR036919">
    <property type="entry name" value="Ribo_uL30_ferredoxin-like_sf"/>
</dbReference>
<dbReference type="InterPro" id="IPR005996">
    <property type="entry name" value="Ribosomal_uL30_bac-type"/>
</dbReference>
<dbReference type="InterPro" id="IPR016082">
    <property type="entry name" value="Ribosomal_uL30_ferredoxin-like"/>
</dbReference>
<dbReference type="NCBIfam" id="TIGR01308">
    <property type="entry name" value="rpmD_bact"/>
    <property type="match status" value="1"/>
</dbReference>
<dbReference type="PANTHER" id="PTHR15892:SF2">
    <property type="entry name" value="LARGE RIBOSOMAL SUBUNIT PROTEIN UL30M"/>
    <property type="match status" value="1"/>
</dbReference>
<dbReference type="PANTHER" id="PTHR15892">
    <property type="entry name" value="MITOCHONDRIAL RIBOSOMAL PROTEIN L30"/>
    <property type="match status" value="1"/>
</dbReference>
<dbReference type="Pfam" id="PF00327">
    <property type="entry name" value="Ribosomal_L30"/>
    <property type="match status" value="1"/>
</dbReference>
<dbReference type="PIRSF" id="PIRSF002211">
    <property type="entry name" value="Ribosomal_L30_bac-type"/>
    <property type="match status" value="1"/>
</dbReference>
<dbReference type="SUPFAM" id="SSF55129">
    <property type="entry name" value="Ribosomal protein L30p/L7e"/>
    <property type="match status" value="1"/>
</dbReference>
<evidence type="ECO:0000255" key="1">
    <source>
        <dbReference type="HAMAP-Rule" id="MF_01371"/>
    </source>
</evidence>
<evidence type="ECO:0000305" key="2"/>
<keyword id="KW-0687">Ribonucleoprotein</keyword>
<keyword id="KW-0689">Ribosomal protein</keyword>
<sequence length="65" mass="7305">MNNKNLINDVKVTQVKSSIGRKYDQKLTLIGLGLNKINKSVVLKNTDSVQGMLKKVEHLLKIENV</sequence>
<organism>
    <name type="scientific">Rickettsia bellii (strain OSU 85-389)</name>
    <dbReference type="NCBI Taxonomy" id="391896"/>
    <lineage>
        <taxon>Bacteria</taxon>
        <taxon>Pseudomonadati</taxon>
        <taxon>Pseudomonadota</taxon>
        <taxon>Alphaproteobacteria</taxon>
        <taxon>Rickettsiales</taxon>
        <taxon>Rickettsiaceae</taxon>
        <taxon>Rickettsieae</taxon>
        <taxon>Rickettsia</taxon>
        <taxon>belli group</taxon>
    </lineage>
</organism>
<reference key="1">
    <citation type="submission" date="2007-09" db="EMBL/GenBank/DDBJ databases">
        <title>Complete genome sequencing of Rickettsia bellii.</title>
        <authorList>
            <person name="Madan A."/>
            <person name="Lee H."/>
            <person name="Madan A."/>
            <person name="Yoon J.-G."/>
            <person name="Ryu G.-Y."/>
            <person name="Dasch G."/>
            <person name="Ereemeva M."/>
        </authorList>
    </citation>
    <scope>NUCLEOTIDE SEQUENCE [LARGE SCALE GENOMIC DNA]</scope>
    <source>
        <strain>OSU 85-389</strain>
    </source>
</reference>
<comment type="subunit">
    <text evidence="1">Part of the 50S ribosomal subunit.</text>
</comment>
<comment type="similarity">
    <text evidence="1">Belongs to the universal ribosomal protein uL30 family.</text>
</comment>
<proteinExistence type="inferred from homology"/>
<protein>
    <recommendedName>
        <fullName evidence="1">Large ribosomal subunit protein uL30</fullName>
    </recommendedName>
    <alternativeName>
        <fullName evidence="2">50S ribosomal protein L30</fullName>
    </alternativeName>
</protein>
<gene>
    <name evidence="1" type="primary">rpmD</name>
    <name type="ordered locus">A1I_02125</name>
</gene>
<feature type="chain" id="PRO_0000347138" description="Large ribosomal subunit protein uL30">
    <location>
        <begin position="1"/>
        <end position="65"/>
    </location>
</feature>
<accession>A8GVD2</accession>
<name>RL30_RICB8</name>